<proteinExistence type="inferred from homology"/>
<protein>
    <recommendedName>
        <fullName evidence="1">Phosphate import ATP-binding protein PstB</fullName>
        <ecNumber evidence="1">7.3.2.1</ecNumber>
    </recommendedName>
    <alternativeName>
        <fullName evidence="1">ABC phosphate transporter</fullName>
    </alternativeName>
    <alternativeName>
        <fullName evidence="1">Phosphate-transporting ATPase</fullName>
    </alternativeName>
</protein>
<gene>
    <name evidence="1" type="primary">pstB</name>
    <name type="ordered locus">BT9727_4009</name>
</gene>
<accession>Q6HDP8</accession>
<feature type="chain" id="PRO_0000092777" description="Phosphate import ATP-binding protein PstB">
    <location>
        <begin position="1"/>
        <end position="271"/>
    </location>
</feature>
<feature type="domain" description="ABC transporter" evidence="1">
    <location>
        <begin position="25"/>
        <end position="266"/>
    </location>
</feature>
<feature type="binding site" evidence="1">
    <location>
        <begin position="57"/>
        <end position="64"/>
    </location>
    <ligand>
        <name>ATP</name>
        <dbReference type="ChEBI" id="CHEBI:30616"/>
    </ligand>
</feature>
<name>PSTB_BACHK</name>
<sequence length="271" mass="30617">MVATVVNVQVKNEEKIETAPKKVVFDTKNLNLWYGEDHALKDINLSIHENEVTAIIGPSGCGKSTYLKTLNRMVELVPIVRTTGVIEYRERNIFDKSYPVEELRTHVGMVFQKPNPFPKSIYENVAYGPKIHGISDKKTLDEIVEKSLRGAAIWDELKDRLHDNAYGLSGGQQQRLCIARCLAIEPDVILMDEPTSALDPISTLKVEELIQELKKDFSIVIVTHNMQQAARISDKTAFFLSGEVVEYTDTNKLFTTPSDKRTEDYITGRFG</sequence>
<organism>
    <name type="scientific">Bacillus thuringiensis subsp. konkukian (strain 97-27)</name>
    <dbReference type="NCBI Taxonomy" id="281309"/>
    <lineage>
        <taxon>Bacteria</taxon>
        <taxon>Bacillati</taxon>
        <taxon>Bacillota</taxon>
        <taxon>Bacilli</taxon>
        <taxon>Bacillales</taxon>
        <taxon>Bacillaceae</taxon>
        <taxon>Bacillus</taxon>
        <taxon>Bacillus cereus group</taxon>
    </lineage>
</organism>
<dbReference type="EC" id="7.3.2.1" evidence="1"/>
<dbReference type="EMBL" id="AE017355">
    <property type="protein sequence ID" value="AAT63479.1"/>
    <property type="molecule type" value="Genomic_DNA"/>
</dbReference>
<dbReference type="RefSeq" id="WP_000226683.1">
    <property type="nucleotide sequence ID" value="NC_005957.1"/>
</dbReference>
<dbReference type="RefSeq" id="YP_038328.1">
    <property type="nucleotide sequence ID" value="NC_005957.1"/>
</dbReference>
<dbReference type="SMR" id="Q6HDP8"/>
<dbReference type="GeneID" id="93006830"/>
<dbReference type="KEGG" id="btk:BT9727_4009"/>
<dbReference type="PATRIC" id="fig|281309.8.peg.4276"/>
<dbReference type="HOGENOM" id="CLU_000604_1_22_9"/>
<dbReference type="Proteomes" id="UP000001301">
    <property type="component" value="Chromosome"/>
</dbReference>
<dbReference type="GO" id="GO:0005886">
    <property type="term" value="C:plasma membrane"/>
    <property type="evidence" value="ECO:0007669"/>
    <property type="project" value="UniProtKB-SubCell"/>
</dbReference>
<dbReference type="GO" id="GO:0005524">
    <property type="term" value="F:ATP binding"/>
    <property type="evidence" value="ECO:0007669"/>
    <property type="project" value="UniProtKB-KW"/>
</dbReference>
<dbReference type="GO" id="GO:0016887">
    <property type="term" value="F:ATP hydrolysis activity"/>
    <property type="evidence" value="ECO:0007669"/>
    <property type="project" value="InterPro"/>
</dbReference>
<dbReference type="GO" id="GO:0015415">
    <property type="term" value="F:ATPase-coupled phosphate ion transmembrane transporter activity"/>
    <property type="evidence" value="ECO:0007669"/>
    <property type="project" value="UniProtKB-EC"/>
</dbReference>
<dbReference type="GO" id="GO:0035435">
    <property type="term" value="P:phosphate ion transmembrane transport"/>
    <property type="evidence" value="ECO:0007669"/>
    <property type="project" value="InterPro"/>
</dbReference>
<dbReference type="CDD" id="cd03260">
    <property type="entry name" value="ABC_PstB_phosphate_transporter"/>
    <property type="match status" value="1"/>
</dbReference>
<dbReference type="FunFam" id="3.40.50.300:FF:000132">
    <property type="entry name" value="Phosphate import ATP-binding protein PstB"/>
    <property type="match status" value="1"/>
</dbReference>
<dbReference type="Gene3D" id="3.40.50.300">
    <property type="entry name" value="P-loop containing nucleotide triphosphate hydrolases"/>
    <property type="match status" value="1"/>
</dbReference>
<dbReference type="InterPro" id="IPR003593">
    <property type="entry name" value="AAA+_ATPase"/>
</dbReference>
<dbReference type="InterPro" id="IPR003439">
    <property type="entry name" value="ABC_transporter-like_ATP-bd"/>
</dbReference>
<dbReference type="InterPro" id="IPR017871">
    <property type="entry name" value="ABC_transporter-like_CS"/>
</dbReference>
<dbReference type="InterPro" id="IPR027417">
    <property type="entry name" value="P-loop_NTPase"/>
</dbReference>
<dbReference type="InterPro" id="IPR005670">
    <property type="entry name" value="PstB-like"/>
</dbReference>
<dbReference type="NCBIfam" id="TIGR00972">
    <property type="entry name" value="3a0107s01c2"/>
    <property type="match status" value="1"/>
</dbReference>
<dbReference type="PANTHER" id="PTHR43423">
    <property type="entry name" value="ABC TRANSPORTER I FAMILY MEMBER 17"/>
    <property type="match status" value="1"/>
</dbReference>
<dbReference type="PANTHER" id="PTHR43423:SF1">
    <property type="entry name" value="ABC TRANSPORTER I FAMILY MEMBER 17"/>
    <property type="match status" value="1"/>
</dbReference>
<dbReference type="Pfam" id="PF00005">
    <property type="entry name" value="ABC_tran"/>
    <property type="match status" value="1"/>
</dbReference>
<dbReference type="SMART" id="SM00382">
    <property type="entry name" value="AAA"/>
    <property type="match status" value="1"/>
</dbReference>
<dbReference type="SUPFAM" id="SSF52540">
    <property type="entry name" value="P-loop containing nucleoside triphosphate hydrolases"/>
    <property type="match status" value="1"/>
</dbReference>
<dbReference type="PROSITE" id="PS00211">
    <property type="entry name" value="ABC_TRANSPORTER_1"/>
    <property type="match status" value="1"/>
</dbReference>
<dbReference type="PROSITE" id="PS50893">
    <property type="entry name" value="ABC_TRANSPORTER_2"/>
    <property type="match status" value="1"/>
</dbReference>
<dbReference type="PROSITE" id="PS51238">
    <property type="entry name" value="PSTB"/>
    <property type="match status" value="1"/>
</dbReference>
<evidence type="ECO:0000255" key="1">
    <source>
        <dbReference type="HAMAP-Rule" id="MF_01702"/>
    </source>
</evidence>
<comment type="function">
    <text evidence="1">Part of the ABC transporter complex PstSACB involved in phosphate import. Responsible for energy coupling to the transport system.</text>
</comment>
<comment type="catalytic activity">
    <reaction evidence="1">
        <text>phosphate(out) + ATP + H2O = ADP + 2 phosphate(in) + H(+)</text>
        <dbReference type="Rhea" id="RHEA:24440"/>
        <dbReference type="ChEBI" id="CHEBI:15377"/>
        <dbReference type="ChEBI" id="CHEBI:15378"/>
        <dbReference type="ChEBI" id="CHEBI:30616"/>
        <dbReference type="ChEBI" id="CHEBI:43474"/>
        <dbReference type="ChEBI" id="CHEBI:456216"/>
        <dbReference type="EC" id="7.3.2.1"/>
    </reaction>
</comment>
<comment type="subunit">
    <text evidence="1">The complex is composed of two ATP-binding proteins (PstB), two transmembrane proteins (PstC and PstA) and a solute-binding protein (PstS).</text>
</comment>
<comment type="subcellular location">
    <subcellularLocation>
        <location evidence="1">Cell membrane</location>
        <topology evidence="1">Peripheral membrane protein</topology>
    </subcellularLocation>
</comment>
<comment type="similarity">
    <text evidence="1">Belongs to the ABC transporter superfamily. Phosphate importer (TC 3.A.1.7) family.</text>
</comment>
<reference key="1">
    <citation type="journal article" date="2006" name="J. Bacteriol.">
        <title>Pathogenomic sequence analysis of Bacillus cereus and Bacillus thuringiensis isolates closely related to Bacillus anthracis.</title>
        <authorList>
            <person name="Han C.S."/>
            <person name="Xie G."/>
            <person name="Challacombe J.F."/>
            <person name="Altherr M.R."/>
            <person name="Bhotika S.S."/>
            <person name="Bruce D."/>
            <person name="Campbell C.S."/>
            <person name="Campbell M.L."/>
            <person name="Chen J."/>
            <person name="Chertkov O."/>
            <person name="Cleland C."/>
            <person name="Dimitrijevic M."/>
            <person name="Doggett N.A."/>
            <person name="Fawcett J.J."/>
            <person name="Glavina T."/>
            <person name="Goodwin L.A."/>
            <person name="Hill K.K."/>
            <person name="Hitchcock P."/>
            <person name="Jackson P.J."/>
            <person name="Keim P."/>
            <person name="Kewalramani A.R."/>
            <person name="Longmire J."/>
            <person name="Lucas S."/>
            <person name="Malfatti S."/>
            <person name="McMurry K."/>
            <person name="Meincke L.J."/>
            <person name="Misra M."/>
            <person name="Moseman B.L."/>
            <person name="Mundt M."/>
            <person name="Munk A.C."/>
            <person name="Okinaka R.T."/>
            <person name="Parson-Quintana B."/>
            <person name="Reilly L.P."/>
            <person name="Richardson P."/>
            <person name="Robinson D.L."/>
            <person name="Rubin E."/>
            <person name="Saunders E."/>
            <person name="Tapia R."/>
            <person name="Tesmer J.G."/>
            <person name="Thayer N."/>
            <person name="Thompson L.S."/>
            <person name="Tice H."/>
            <person name="Ticknor L.O."/>
            <person name="Wills P.L."/>
            <person name="Brettin T.S."/>
            <person name="Gilna P."/>
        </authorList>
    </citation>
    <scope>NUCLEOTIDE SEQUENCE [LARGE SCALE GENOMIC DNA]</scope>
    <source>
        <strain>97-27</strain>
    </source>
</reference>
<keyword id="KW-0067">ATP-binding</keyword>
<keyword id="KW-1003">Cell membrane</keyword>
<keyword id="KW-0472">Membrane</keyword>
<keyword id="KW-0547">Nucleotide-binding</keyword>
<keyword id="KW-0592">Phosphate transport</keyword>
<keyword id="KW-1278">Translocase</keyword>
<keyword id="KW-0813">Transport</keyword>